<accession>P0A2H5</accession>
<accession>P57050</accession>
<evidence type="ECO:0000255" key="1">
    <source>
        <dbReference type="HAMAP-Rule" id="MF_00903"/>
    </source>
</evidence>
<sequence length="67" mass="7084">MGEISITKLLVVAALVVLLFGTKKLRTLGGDLGTAIKGFKKAMNDEDAGVKKDVDGSVQAEKLSHKE</sequence>
<comment type="function">
    <text evidence="1">Part of the twin-arginine translocation (Tat) system that transports large folded proteins containing a characteristic twin-arginine motif in their signal peptide across membranes. TatE shares overlapping functions with TatA.</text>
</comment>
<comment type="subcellular location">
    <subcellularLocation>
        <location evidence="1">Cell inner membrane</location>
        <topology evidence="1">Single-pass membrane protein</topology>
    </subcellularLocation>
</comment>
<comment type="similarity">
    <text evidence="1">Belongs to the TatA/E family. TatE subfamily.</text>
</comment>
<gene>
    <name evidence="1" type="primary">tatE</name>
    <name type="ordered locus">STM0632</name>
</gene>
<name>TATE_SALTY</name>
<protein>
    <recommendedName>
        <fullName evidence="1">Probable Sec-independent protein translocase protein TatE</fullName>
    </recommendedName>
</protein>
<keyword id="KW-0997">Cell inner membrane</keyword>
<keyword id="KW-1003">Cell membrane</keyword>
<keyword id="KW-0472">Membrane</keyword>
<keyword id="KW-0653">Protein transport</keyword>
<keyword id="KW-1185">Reference proteome</keyword>
<keyword id="KW-0811">Translocation</keyword>
<keyword id="KW-0812">Transmembrane</keyword>
<keyword id="KW-1133">Transmembrane helix</keyword>
<keyword id="KW-0813">Transport</keyword>
<reference key="1">
    <citation type="journal article" date="1998" name="Cell">
        <title>Lipid A acylation and bacterial resistance against vertebrate antimicrobial peptides.</title>
        <authorList>
            <person name="Guo L."/>
            <person name="Lim K.B."/>
            <person name="Poduje C.M."/>
            <person name="Morad D."/>
            <person name="Gunn J.S."/>
            <person name="Hackett M."/>
            <person name="Miller S.I."/>
        </authorList>
    </citation>
    <scope>NUCLEOTIDE SEQUENCE [GENOMIC DNA]</scope>
    <source>
        <strain>ATCC 14028s / SGSG 2262</strain>
    </source>
</reference>
<reference key="2">
    <citation type="journal article" date="2001" name="Nature">
        <title>Complete genome sequence of Salmonella enterica serovar Typhimurium LT2.</title>
        <authorList>
            <person name="McClelland M."/>
            <person name="Sanderson K.E."/>
            <person name="Spieth J."/>
            <person name="Clifton S.W."/>
            <person name="Latreille P."/>
            <person name="Courtney L."/>
            <person name="Porwollik S."/>
            <person name="Ali J."/>
            <person name="Dante M."/>
            <person name="Du F."/>
            <person name="Hou S."/>
            <person name="Layman D."/>
            <person name="Leonard S."/>
            <person name="Nguyen C."/>
            <person name="Scott K."/>
            <person name="Holmes A."/>
            <person name="Grewal N."/>
            <person name="Mulvaney E."/>
            <person name="Ryan E."/>
            <person name="Sun H."/>
            <person name="Florea L."/>
            <person name="Miller W."/>
            <person name="Stoneking T."/>
            <person name="Nhan M."/>
            <person name="Waterston R."/>
            <person name="Wilson R.K."/>
        </authorList>
    </citation>
    <scope>NUCLEOTIDE SEQUENCE [LARGE SCALE GENOMIC DNA]</scope>
    <source>
        <strain>LT2 / SGSC1412 / ATCC 700720</strain>
    </source>
</reference>
<organism>
    <name type="scientific">Salmonella typhimurium (strain LT2 / SGSC1412 / ATCC 700720)</name>
    <dbReference type="NCBI Taxonomy" id="99287"/>
    <lineage>
        <taxon>Bacteria</taxon>
        <taxon>Pseudomonadati</taxon>
        <taxon>Pseudomonadota</taxon>
        <taxon>Gammaproteobacteria</taxon>
        <taxon>Enterobacterales</taxon>
        <taxon>Enterobacteriaceae</taxon>
        <taxon>Salmonella</taxon>
    </lineage>
</organism>
<proteinExistence type="inferred from homology"/>
<feature type="chain" id="PRO_0000097977" description="Probable Sec-independent protein translocase protein TatE">
    <location>
        <begin position="1"/>
        <end position="67"/>
    </location>
</feature>
<feature type="transmembrane region" description="Helical" evidence="1">
    <location>
        <begin position="4"/>
        <end position="21"/>
    </location>
</feature>
<dbReference type="EMBL" id="AF057021">
    <property type="status" value="NOT_ANNOTATED_CDS"/>
    <property type="molecule type" value="Genomic_DNA"/>
</dbReference>
<dbReference type="EMBL" id="AE006468">
    <property type="protein sequence ID" value="AAL19583.1"/>
    <property type="molecule type" value="Genomic_DNA"/>
</dbReference>
<dbReference type="RefSeq" id="WP_000503938.1">
    <property type="nucleotide sequence ID" value="NC_003197.2"/>
</dbReference>
<dbReference type="SMR" id="P0A2H5"/>
<dbReference type="STRING" id="99287.STM0632"/>
<dbReference type="PaxDb" id="99287-STM0632"/>
<dbReference type="KEGG" id="stm:STM0632"/>
<dbReference type="PATRIC" id="fig|99287.12.peg.666"/>
<dbReference type="HOGENOM" id="CLU_086034_5_3_6"/>
<dbReference type="OMA" id="RDEDKPN"/>
<dbReference type="PhylomeDB" id="P0A2H5"/>
<dbReference type="BioCyc" id="SENT99287:STM0632-MONOMER"/>
<dbReference type="Proteomes" id="UP000001014">
    <property type="component" value="Chromosome"/>
</dbReference>
<dbReference type="GO" id="GO:0033281">
    <property type="term" value="C:TAT protein transport complex"/>
    <property type="evidence" value="ECO:0007669"/>
    <property type="project" value="UniProtKB-UniRule"/>
</dbReference>
<dbReference type="GO" id="GO:0008320">
    <property type="term" value="F:protein transmembrane transporter activity"/>
    <property type="evidence" value="ECO:0007669"/>
    <property type="project" value="UniProtKB-UniRule"/>
</dbReference>
<dbReference type="GO" id="GO:0043953">
    <property type="term" value="P:protein transport by the Tat complex"/>
    <property type="evidence" value="ECO:0007669"/>
    <property type="project" value="UniProtKB-UniRule"/>
</dbReference>
<dbReference type="FunFam" id="1.20.5.3310:FF:000001">
    <property type="entry name" value="Probable Sec-independent protein translocase protein TatE"/>
    <property type="match status" value="1"/>
</dbReference>
<dbReference type="Gene3D" id="1.20.5.3310">
    <property type="match status" value="1"/>
</dbReference>
<dbReference type="HAMAP" id="MF_00236">
    <property type="entry name" value="TatA_E"/>
    <property type="match status" value="1"/>
</dbReference>
<dbReference type="HAMAP" id="MF_00903">
    <property type="entry name" value="TatE"/>
    <property type="match status" value="1"/>
</dbReference>
<dbReference type="InterPro" id="IPR003369">
    <property type="entry name" value="TatA/B/E"/>
</dbReference>
<dbReference type="InterPro" id="IPR006312">
    <property type="entry name" value="TatA/E"/>
</dbReference>
<dbReference type="InterPro" id="IPR024905">
    <property type="entry name" value="TatE"/>
</dbReference>
<dbReference type="NCBIfam" id="NF002448">
    <property type="entry name" value="PRK01614.1"/>
    <property type="match status" value="1"/>
</dbReference>
<dbReference type="NCBIfam" id="NF002960">
    <property type="entry name" value="PRK03625.1"/>
    <property type="match status" value="1"/>
</dbReference>
<dbReference type="NCBIfam" id="TIGR01411">
    <property type="entry name" value="tatAE"/>
    <property type="match status" value="1"/>
</dbReference>
<dbReference type="PANTHER" id="PTHR42982">
    <property type="entry name" value="SEC-INDEPENDENT PROTEIN TRANSLOCASE PROTEIN TATA"/>
    <property type="match status" value="1"/>
</dbReference>
<dbReference type="PANTHER" id="PTHR42982:SF5">
    <property type="entry name" value="SEC-INDEPENDENT PROTEIN TRANSLOCASE PROTEIN TATE"/>
    <property type="match status" value="1"/>
</dbReference>
<dbReference type="Pfam" id="PF02416">
    <property type="entry name" value="TatA_B_E"/>
    <property type="match status" value="1"/>
</dbReference>